<protein>
    <recommendedName>
        <fullName evidence="1">Nucleoprotein</fullName>
    </recommendedName>
    <alternativeName>
        <fullName evidence="1">Nucleocapsid protein</fullName>
        <shortName evidence="1">Protein N</shortName>
    </alternativeName>
</protein>
<dbReference type="EMBL" id="M76607">
    <property type="protein sequence ID" value="AAA73109.1"/>
    <property type="molecule type" value="mRNA"/>
</dbReference>
<dbReference type="EMBL" id="CY026294">
    <property type="protein sequence ID" value="ABV82588.1"/>
    <property type="molecule type" value="Viral_cRNA"/>
</dbReference>
<dbReference type="SMR" id="Q67356"/>
<dbReference type="Proteomes" id="UP000116872">
    <property type="component" value="Genome"/>
</dbReference>
<dbReference type="GO" id="GO:0019029">
    <property type="term" value="C:helical viral capsid"/>
    <property type="evidence" value="ECO:0007669"/>
    <property type="project" value="UniProtKB-UniRule"/>
</dbReference>
<dbReference type="GO" id="GO:0043657">
    <property type="term" value="C:host cell"/>
    <property type="evidence" value="ECO:0007669"/>
    <property type="project" value="GOC"/>
</dbReference>
<dbReference type="GO" id="GO:0042025">
    <property type="term" value="C:host cell nucleus"/>
    <property type="evidence" value="ECO:0007669"/>
    <property type="project" value="UniProtKB-SubCell"/>
</dbReference>
<dbReference type="GO" id="GO:1990904">
    <property type="term" value="C:ribonucleoprotein complex"/>
    <property type="evidence" value="ECO:0007669"/>
    <property type="project" value="UniProtKB-KW"/>
</dbReference>
<dbReference type="GO" id="GO:0019013">
    <property type="term" value="C:viral nucleocapsid"/>
    <property type="evidence" value="ECO:0007669"/>
    <property type="project" value="UniProtKB-UniRule"/>
</dbReference>
<dbReference type="GO" id="GO:0003723">
    <property type="term" value="F:RNA binding"/>
    <property type="evidence" value="ECO:0007669"/>
    <property type="project" value="UniProtKB-UniRule"/>
</dbReference>
<dbReference type="GO" id="GO:0005198">
    <property type="term" value="F:structural molecule activity"/>
    <property type="evidence" value="ECO:0007669"/>
    <property type="project" value="UniProtKB-UniRule"/>
</dbReference>
<dbReference type="GO" id="GO:0046718">
    <property type="term" value="P:symbiont entry into host cell"/>
    <property type="evidence" value="ECO:0007669"/>
    <property type="project" value="UniProtKB-KW"/>
</dbReference>
<dbReference type="GO" id="GO:0075732">
    <property type="term" value="P:viral penetration into host nucleus"/>
    <property type="evidence" value="ECO:0007669"/>
    <property type="project" value="UniProtKB-UniRule"/>
</dbReference>
<dbReference type="HAMAP" id="MF_04070">
    <property type="entry name" value="INFV_NCAP"/>
    <property type="match status" value="1"/>
</dbReference>
<dbReference type="InterPro" id="IPR002141">
    <property type="entry name" value="Flu_NP"/>
</dbReference>
<dbReference type="Pfam" id="PF00506">
    <property type="entry name" value="Flu_NP"/>
    <property type="match status" value="1"/>
</dbReference>
<dbReference type="SUPFAM" id="SSF161003">
    <property type="entry name" value="flu NP-like"/>
    <property type="match status" value="1"/>
</dbReference>
<evidence type="ECO:0000255" key="1">
    <source>
        <dbReference type="HAMAP-Rule" id="MF_04070"/>
    </source>
</evidence>
<evidence type="ECO:0000256" key="2">
    <source>
        <dbReference type="SAM" id="MobiDB-lite"/>
    </source>
</evidence>
<comment type="function">
    <text evidence="1">Encapsidates the negative strand viral RNA, protecting it from nucleases. The encapsidated genomic RNA is termed the ribonucleoprotein (RNP) and serves as template for transcription and replication. The RNP needs to be localized in the host nucleus to start an infectious cycle, but is too large to diffuse through the nuclear pore complex. NP comprises at least 2 nuclear localization signals that are responsible for the active RNP import into the nucleus through cellular importin alpha/beta pathway. Later in the infection, nclear export of RNPs are mediated through viral proteins NEP interacting with M1 which binds nucleoproteins. It is possible that nucleoprotein binds directly host exportin-1/XPO1 and plays an active role in RNPs nuclear export. M1 interaction with RNP seems to hide nucleoprotein's nuclear localization signals. Soon after a virion infects a new cell, M1 dissociates from the RNP under acidification of the virion driven by M2 protein. Dissociation of M1 from RNP unmasks nucleoprotein's nuclear localization signals, targeting the RNP to the nucleus.</text>
</comment>
<comment type="subunit">
    <text evidence="1">Homomultimerizes to form the nucleocapsid. May bind host exportin-1/XPO1. Binds to viral genomic RNA. Protein-RNA contacts are mediated by a combination of electrostatic interactions between positively charged residues and the phosphate backbone and planar interactions between aromatic side chains and bases.</text>
</comment>
<comment type="subcellular location">
    <subcellularLocation>
        <location evidence="1">Virion</location>
    </subcellularLocation>
    <subcellularLocation>
        <location evidence="1">Host nucleus</location>
    </subcellularLocation>
</comment>
<comment type="PTM">
    <text evidence="1">Late in virus-infected cells, may be cleaved from a 56-kDa protein to a 53-kDa protein by a cellular caspase. This cleavage might be a marker for the onset of apoptosis in infected cells or have a specific function in virus host interaction.</text>
</comment>
<comment type="similarity">
    <text evidence="1">Belongs to the influenza viruses nucleoprotein family.</text>
</comment>
<sequence length="498" mass="56087">MASQGTKRSYEQMETGGERQDATEIRASVGRMIGGIGRFYIQMCTELKLSDYEGRLIQNSITIERMVLSAFDERRNKYLEEHPSVGKDPKKTGGPIYRRIDGKWMRELILYDKEEIRRVWRQANNGEDATAGLTHIMIWHSNLNDATYQRTRALVRTGMDPRMCSLMQGSTLPRRSGAAGAAVKGVGTIVMELIRMIKRGINDRNFWRGENGRRTRIAYERMCNILKGKFQTAAQRAMMDQVRESRNPGNAEIEDLIFLARSALILRGSVAHKSCLPACVYGLAVASGHDFEREGYSLVGIDPFKLLQNSQVFSLIRPNENPAHKSQLVWMACHSAAFEDLRVSGFIRGKKVVPRGKLSTRGVQIASNENVEAMDSSTLELRSRYWAIRTRSGGNTNQQKASAGQISVQPTFSVQRNLPFERATVMAAFVGNNEGRTSDMRTEIIRMMESAKPEDLSFQGRGVFELSDEKATNPIVPSFDMNNEGSYFFGDNAEEYDN</sequence>
<gene>
    <name evidence="1" type="primary">NP</name>
</gene>
<keyword id="KW-0167">Capsid protein</keyword>
<keyword id="KW-1139">Helical capsid protein</keyword>
<keyword id="KW-1048">Host nucleus</keyword>
<keyword id="KW-0945">Host-virus interaction</keyword>
<keyword id="KW-0687">Ribonucleoprotein</keyword>
<keyword id="KW-0694">RNA-binding</keyword>
<keyword id="KW-0543">Viral nucleoprotein</keyword>
<keyword id="KW-1163">Viral penetration into host nucleus</keyword>
<keyword id="KW-0946">Virion</keyword>
<keyword id="KW-1160">Virus entry into host cell</keyword>
<name>NCAP_I67A2</name>
<accession>Q67356</accession>
<accession>A8C8W7</accession>
<proteinExistence type="evidence at transcript level"/>
<organismHost>
    <name type="scientific">Aves</name>
    <dbReference type="NCBI Taxonomy" id="8782"/>
</organismHost>
<organismHost>
    <name type="scientific">Homo sapiens</name>
    <name type="common">Human</name>
    <dbReference type="NCBI Taxonomy" id="9606"/>
</organismHost>
<organismHost>
    <name type="scientific">Sus scrofa</name>
    <name type="common">Pig</name>
    <dbReference type="NCBI Taxonomy" id="9823"/>
</organismHost>
<reference key="1">
    <citation type="journal article" date="1992" name="Virus Res.">
        <title>Genetic relatedness of the nucleoprotein (NP) of recent swine, turkey, and human influenza A virus (H1N1) isolates.</title>
        <authorList>
            <person name="Altmuller A."/>
            <person name="Kunerl M."/>
            <person name="Muller K."/>
            <person name="Hinshaw V.S."/>
            <person name="Fitch W.M."/>
            <person name="Scholtissek C."/>
        </authorList>
    </citation>
    <scope>NUCLEOTIDE SEQUENCE [GENOMIC RNA]</scope>
</reference>
<reference key="2">
    <citation type="submission" date="2007-10" db="EMBL/GenBank/DDBJ databases">
        <title>The NIAID influenza genome sequencing project.</title>
        <authorList>
            <person name="Ghedin E."/>
            <person name="Spiro D."/>
            <person name="Miller N."/>
            <person name="Zaborsky J."/>
            <person name="Feldblyum T."/>
            <person name="Subbu V."/>
            <person name="Shumway M."/>
            <person name="Sparenborg J."/>
            <person name="Groveman L."/>
            <person name="Halpin R."/>
            <person name="Sitz J."/>
            <person name="Koo H."/>
            <person name="Salzberg S.L."/>
            <person name="Webster R.G."/>
            <person name="Hoffmann E."/>
            <person name="Krauss S."/>
            <person name="Naeve C."/>
            <person name="Bao Y."/>
            <person name="Bolotov P."/>
            <person name="Dernovoy D."/>
            <person name="Kiryutin B."/>
            <person name="Lipman D.J."/>
            <person name="Tatusova T."/>
        </authorList>
    </citation>
    <scope>NUCLEOTIDE SEQUENCE [GENOMIC RNA]</scope>
</reference>
<reference key="3">
    <citation type="submission" date="2007-10" db="EMBL/GenBank/DDBJ databases">
        <authorList>
            <consortium name="The NIAID Influenza Genome Sequencing Consortium"/>
        </authorList>
    </citation>
    <scope>NUCLEOTIDE SEQUENCE [GENOMIC RNA]</scope>
</reference>
<feature type="chain" id="PRO_0000372940" description="Nucleoprotein">
    <location>
        <begin position="1"/>
        <end position="498"/>
    </location>
</feature>
<feature type="region of interest" description="Disordered" evidence="2">
    <location>
        <begin position="1"/>
        <end position="22"/>
    </location>
</feature>
<feature type="short sequence motif" description="Unconventional nuclear localization signal" evidence="1">
    <location>
        <begin position="1"/>
        <end position="18"/>
    </location>
</feature>
<feature type="short sequence motif" description="Bipartite nuclear localization signal" evidence="1">
    <location>
        <begin position="198"/>
        <end position="216"/>
    </location>
</feature>
<feature type="compositionally biased region" description="Basic and acidic residues" evidence="2">
    <location>
        <begin position="8"/>
        <end position="22"/>
    </location>
</feature>
<feature type="sequence variant">
    <original>V</original>
    <variation>A</variation>
    <location>
        <position position="85"/>
    </location>
</feature>
<organism>
    <name type="scientific">Influenza A virus (strain A/Swine/Wisconsin/1/1967 H1N1)</name>
    <dbReference type="NCBI Taxonomy" id="382855"/>
    <lineage>
        <taxon>Viruses</taxon>
        <taxon>Riboviria</taxon>
        <taxon>Orthornavirae</taxon>
        <taxon>Negarnaviricota</taxon>
        <taxon>Polyploviricotina</taxon>
        <taxon>Insthoviricetes</taxon>
        <taxon>Articulavirales</taxon>
        <taxon>Orthomyxoviridae</taxon>
        <taxon>Alphainfluenzavirus</taxon>
        <taxon>Alphainfluenzavirus influenzae</taxon>
        <taxon>Influenza A virus</taxon>
    </lineage>
</organism>